<dbReference type="EC" id="2.1.1.359" evidence="2"/>
<dbReference type="EMBL" id="AE017347">
    <property type="protein sequence ID" value="AAW44778.1"/>
    <property type="molecule type" value="Genomic_DNA"/>
</dbReference>
<dbReference type="RefSeq" id="XP_572085.1">
    <property type="nucleotide sequence ID" value="XM_572085.1"/>
</dbReference>
<dbReference type="SMR" id="P0CO28"/>
<dbReference type="FunCoup" id="P0CO28">
    <property type="interactions" value="78"/>
</dbReference>
<dbReference type="STRING" id="214684.P0CO28"/>
<dbReference type="PaxDb" id="214684-P0CO28"/>
<dbReference type="EnsemblFungi" id="AAW44778">
    <property type="protein sequence ID" value="AAW44778"/>
    <property type="gene ID" value="CNG03810"/>
</dbReference>
<dbReference type="VEuPathDB" id="FungiDB:CNG03810"/>
<dbReference type="eggNOG" id="KOG4442">
    <property type="taxonomic scope" value="Eukaryota"/>
</dbReference>
<dbReference type="HOGENOM" id="CLU_008492_1_3_1"/>
<dbReference type="InParanoid" id="P0CO28"/>
<dbReference type="OMA" id="AQSQPCY"/>
<dbReference type="OrthoDB" id="422362at2759"/>
<dbReference type="Proteomes" id="UP000002149">
    <property type="component" value="Chromosome 7"/>
</dbReference>
<dbReference type="GO" id="GO:0000785">
    <property type="term" value="C:chromatin"/>
    <property type="evidence" value="ECO:0000318"/>
    <property type="project" value="GO_Central"/>
</dbReference>
<dbReference type="GO" id="GO:0005634">
    <property type="term" value="C:nucleus"/>
    <property type="evidence" value="ECO:0000318"/>
    <property type="project" value="GO_Central"/>
</dbReference>
<dbReference type="GO" id="GO:0046975">
    <property type="term" value="F:histone H3K36 methyltransferase activity"/>
    <property type="evidence" value="ECO:0000318"/>
    <property type="project" value="GO_Central"/>
</dbReference>
<dbReference type="GO" id="GO:0140955">
    <property type="term" value="F:histone H3K36 trimethyltransferase activity"/>
    <property type="evidence" value="ECO:0007669"/>
    <property type="project" value="UniProtKB-EC"/>
</dbReference>
<dbReference type="GO" id="GO:0032259">
    <property type="term" value="P:methylation"/>
    <property type="evidence" value="ECO:0007669"/>
    <property type="project" value="UniProtKB-KW"/>
</dbReference>
<dbReference type="GO" id="GO:0006355">
    <property type="term" value="P:regulation of DNA-templated transcription"/>
    <property type="evidence" value="ECO:0000318"/>
    <property type="project" value="GO_Central"/>
</dbReference>
<dbReference type="CDD" id="cd19172">
    <property type="entry name" value="SET_SETD2"/>
    <property type="match status" value="1"/>
</dbReference>
<dbReference type="FunFam" id="2.170.270.10:FF:000062">
    <property type="entry name" value="Histone-lysine N-methyltransferase, H3 lysine-36 specific"/>
    <property type="match status" value="1"/>
</dbReference>
<dbReference type="Gene3D" id="2.170.270.10">
    <property type="entry name" value="SET domain"/>
    <property type="match status" value="1"/>
</dbReference>
<dbReference type="Gene3D" id="1.10.1740.100">
    <property type="entry name" value="Set2, Rpb1 interacting domain"/>
    <property type="match status" value="1"/>
</dbReference>
<dbReference type="InterPro" id="IPR006560">
    <property type="entry name" value="AWS_dom"/>
</dbReference>
<dbReference type="InterPro" id="IPR003616">
    <property type="entry name" value="Post-SET_dom"/>
</dbReference>
<dbReference type="InterPro" id="IPR025788">
    <property type="entry name" value="Set2_fungi"/>
</dbReference>
<dbReference type="InterPro" id="IPR050777">
    <property type="entry name" value="SET2_Histone-Lys_MeTrsfase"/>
</dbReference>
<dbReference type="InterPro" id="IPR001214">
    <property type="entry name" value="SET_dom"/>
</dbReference>
<dbReference type="InterPro" id="IPR046341">
    <property type="entry name" value="SET_dom_sf"/>
</dbReference>
<dbReference type="InterPro" id="IPR044437">
    <property type="entry name" value="SETD2/Set2_SET"/>
</dbReference>
<dbReference type="InterPro" id="IPR013257">
    <property type="entry name" value="SRI"/>
</dbReference>
<dbReference type="InterPro" id="IPR038190">
    <property type="entry name" value="SRI_sf"/>
</dbReference>
<dbReference type="InterPro" id="IPR017923">
    <property type="entry name" value="TFIIS_N"/>
</dbReference>
<dbReference type="PANTHER" id="PTHR22884">
    <property type="entry name" value="SET DOMAIN PROTEINS"/>
    <property type="match status" value="1"/>
</dbReference>
<dbReference type="Pfam" id="PF17907">
    <property type="entry name" value="AWS"/>
    <property type="match status" value="1"/>
</dbReference>
<dbReference type="Pfam" id="PF08711">
    <property type="entry name" value="Med26"/>
    <property type="match status" value="1"/>
</dbReference>
<dbReference type="Pfam" id="PF00856">
    <property type="entry name" value="SET"/>
    <property type="match status" value="1"/>
</dbReference>
<dbReference type="Pfam" id="PF08236">
    <property type="entry name" value="SRI"/>
    <property type="match status" value="1"/>
</dbReference>
<dbReference type="SMART" id="SM00570">
    <property type="entry name" value="AWS"/>
    <property type="match status" value="1"/>
</dbReference>
<dbReference type="SMART" id="SM00508">
    <property type="entry name" value="PostSET"/>
    <property type="match status" value="1"/>
</dbReference>
<dbReference type="SMART" id="SM00317">
    <property type="entry name" value="SET"/>
    <property type="match status" value="1"/>
</dbReference>
<dbReference type="SUPFAM" id="SSF82199">
    <property type="entry name" value="SET domain"/>
    <property type="match status" value="1"/>
</dbReference>
<dbReference type="PROSITE" id="PS51215">
    <property type="entry name" value="AWS"/>
    <property type="match status" value="1"/>
</dbReference>
<dbReference type="PROSITE" id="PS50868">
    <property type="entry name" value="POST_SET"/>
    <property type="match status" value="1"/>
</dbReference>
<dbReference type="PROSITE" id="PS51568">
    <property type="entry name" value="SAM_MT43_SET2_1"/>
    <property type="match status" value="1"/>
</dbReference>
<dbReference type="PROSITE" id="PS50280">
    <property type="entry name" value="SET"/>
    <property type="match status" value="1"/>
</dbReference>
<reference key="1">
    <citation type="journal article" date="2005" name="Science">
        <title>The genome of the basidiomycetous yeast and human pathogen Cryptococcus neoformans.</title>
        <authorList>
            <person name="Loftus B.J."/>
            <person name="Fung E."/>
            <person name="Roncaglia P."/>
            <person name="Rowley D."/>
            <person name="Amedeo P."/>
            <person name="Bruno D."/>
            <person name="Vamathevan J."/>
            <person name="Miranda M."/>
            <person name="Anderson I.J."/>
            <person name="Fraser J.A."/>
            <person name="Allen J.E."/>
            <person name="Bosdet I.E."/>
            <person name="Brent M.R."/>
            <person name="Chiu R."/>
            <person name="Doering T.L."/>
            <person name="Donlin M.J."/>
            <person name="D'Souza C.A."/>
            <person name="Fox D.S."/>
            <person name="Grinberg V."/>
            <person name="Fu J."/>
            <person name="Fukushima M."/>
            <person name="Haas B.J."/>
            <person name="Huang J.C."/>
            <person name="Janbon G."/>
            <person name="Jones S.J.M."/>
            <person name="Koo H.L."/>
            <person name="Krzywinski M.I."/>
            <person name="Kwon-Chung K.J."/>
            <person name="Lengeler K.B."/>
            <person name="Maiti R."/>
            <person name="Marra M.A."/>
            <person name="Marra R.E."/>
            <person name="Mathewson C.A."/>
            <person name="Mitchell T.G."/>
            <person name="Pertea M."/>
            <person name="Riggs F.R."/>
            <person name="Salzberg S.L."/>
            <person name="Schein J.E."/>
            <person name="Shvartsbeyn A."/>
            <person name="Shin H."/>
            <person name="Shumway M."/>
            <person name="Specht C.A."/>
            <person name="Suh B.B."/>
            <person name="Tenney A."/>
            <person name="Utterback T.R."/>
            <person name="Wickes B.L."/>
            <person name="Wortman J.R."/>
            <person name="Wye N.H."/>
            <person name="Kronstad J.W."/>
            <person name="Lodge J.K."/>
            <person name="Heitman J."/>
            <person name="Davis R.W."/>
            <person name="Fraser C.M."/>
            <person name="Hyman R.W."/>
        </authorList>
    </citation>
    <scope>NUCLEOTIDE SEQUENCE [LARGE SCALE GENOMIC DNA]</scope>
    <source>
        <strain>JEC21 / ATCC MYA-565</strain>
    </source>
</reference>
<proteinExistence type="inferred from homology"/>
<organism>
    <name type="scientific">Cryptococcus neoformans var. neoformans serotype D (strain JEC21 / ATCC MYA-565)</name>
    <name type="common">Filobasidiella neoformans</name>
    <dbReference type="NCBI Taxonomy" id="214684"/>
    <lineage>
        <taxon>Eukaryota</taxon>
        <taxon>Fungi</taxon>
        <taxon>Dikarya</taxon>
        <taxon>Basidiomycota</taxon>
        <taxon>Agaricomycotina</taxon>
        <taxon>Tremellomycetes</taxon>
        <taxon>Tremellales</taxon>
        <taxon>Cryptococcaceae</taxon>
        <taxon>Cryptococcus</taxon>
        <taxon>Cryptococcus neoformans species complex</taxon>
    </lineage>
</organism>
<evidence type="ECO:0000250" key="1"/>
<evidence type="ECO:0000250" key="2">
    <source>
        <dbReference type="UniProtKB" id="P46995"/>
    </source>
</evidence>
<evidence type="ECO:0000255" key="3">
    <source>
        <dbReference type="PROSITE-ProRule" id="PRU00155"/>
    </source>
</evidence>
<evidence type="ECO:0000255" key="4">
    <source>
        <dbReference type="PROSITE-ProRule" id="PRU00190"/>
    </source>
</evidence>
<evidence type="ECO:0000255" key="5">
    <source>
        <dbReference type="PROSITE-ProRule" id="PRU00562"/>
    </source>
</evidence>
<evidence type="ECO:0000255" key="6">
    <source>
        <dbReference type="PROSITE-ProRule" id="PRU00901"/>
    </source>
</evidence>
<evidence type="ECO:0000256" key="7">
    <source>
        <dbReference type="SAM" id="MobiDB-lite"/>
    </source>
</evidence>
<protein>
    <recommendedName>
        <fullName>Histone-lysine N-methyltransferase, H3 lysine-36 specific</fullName>
        <ecNumber evidence="2">2.1.1.359</ecNumber>
    </recommendedName>
    <alternativeName>
        <fullName>SET domain-containing protein 2</fullName>
    </alternativeName>
</protein>
<sequence>MGDIIEGTKPTLDDLWAGDEDQKPQTPPVSPPRSPSFKHEHKSSFPGSTSPPPASPIGEEDLKPRTARASSSTSKVKSRKASPEEFKPVLIDDLPTAWDEAHETFEALEKCVYERKDIGLSKENDEMMVCECVYNRHDPDADPCGPDSDCINRALYIECIAGECRAGKHCHNQQFSKRQYANVDVVLTEKKGYGLRASSTIPANTLIYEYIGEVVAEKTFRKRMQQYADEGIRHFYFMMLQKEEYIDATKKGGIGRFANHSCNPNCEVQKWVVGRRLRMGIFTKRDVIKGEEITFNYNVDRYGHDAQTCYCGEPNCVGTIGGKTQTDIGTMNDLFLDALGITDEVEAMGMKGSKKKKSRQLDEDFVPILRPISAHEVQKVAAAIRQSMENKKMMSRLLQRIQMTDDGAMHRQLMRMHGFSLMYMVLTELADDNEIVLLALESMNKWKLQIRNKIEDSKIEEPVKALSQSGDEKICGLAKQLIEYWSTLELSYKIPRVSKIASLDADDEAGTQTIAEANVVSAARRPDAWENTQEIQIDIAPVRPRTLPVSRPRPPPPPPPLPVKKPALNSMSSTDRLKLDAIIAMAEQTVQAQAAAAAVEATASPQAGSSRSGSRPAEDEERRKRQKRTHMTEEELAEQKERRLRKLIGAVVVKSMNKYKDMMEHDTFKKYARECTDTLVKKEKKRNPSYQDVKHPSLSDDKKAKIKSFTKDYTHKILKHLKEKGKLRNPKSSSSLRTNSNDPRQAASSSTNGDTPSISTTPSQGAIQRLRDGELVDDIFGADEDMVMDLDEDTPEMQNDHPAPPSVPPATPPLPPVHVEVVDNVSTPTSQWET</sequence>
<comment type="function">
    <text evidence="2">Histone methyltransferase that trimethylates histone H3 'Lys-36' forming H3K36me3. Involved in transcription elongation as well as in transcription repression.</text>
</comment>
<comment type="catalytic activity">
    <reaction evidence="2 6">
        <text>L-lysyl(36)-[histone H3] + 3 S-adenosyl-L-methionine = N(6),N(6),N(6)-trimethyl-L-lysyl(36)-[histone H3] + 3 S-adenosyl-L-homocysteine + 3 H(+)</text>
        <dbReference type="Rhea" id="RHEA:60324"/>
        <dbReference type="Rhea" id="RHEA-COMP:9785"/>
        <dbReference type="Rhea" id="RHEA-COMP:15536"/>
        <dbReference type="ChEBI" id="CHEBI:15378"/>
        <dbReference type="ChEBI" id="CHEBI:29969"/>
        <dbReference type="ChEBI" id="CHEBI:57856"/>
        <dbReference type="ChEBI" id="CHEBI:59789"/>
        <dbReference type="ChEBI" id="CHEBI:61961"/>
        <dbReference type="EC" id="2.1.1.359"/>
    </reaction>
</comment>
<comment type="subcellular location">
    <subcellularLocation>
        <location evidence="1">Nucleus</location>
    </subcellularLocation>
    <subcellularLocation>
        <location evidence="1">Chromosome</location>
    </subcellularLocation>
</comment>
<comment type="domain">
    <text evidence="1">The AWS and SET domains are necessary for transcription repression.</text>
</comment>
<comment type="similarity">
    <text evidence="6">Belongs to the class V-like SAM-binding methyltransferase superfamily. Histone-lysine methyltransferase family. SET2 subfamily.</text>
</comment>
<feature type="chain" id="PRO_0000269786" description="Histone-lysine N-methyltransferase, H3 lysine-36 specific">
    <location>
        <begin position="1"/>
        <end position="834"/>
    </location>
</feature>
<feature type="domain" description="AWS" evidence="5">
    <location>
        <begin position="125"/>
        <end position="179"/>
    </location>
</feature>
<feature type="domain" description="SET" evidence="4">
    <location>
        <begin position="181"/>
        <end position="298"/>
    </location>
</feature>
<feature type="domain" description="Post-SET" evidence="3">
    <location>
        <begin position="305"/>
        <end position="321"/>
    </location>
</feature>
<feature type="region of interest" description="Disordered" evidence="7">
    <location>
        <begin position="1"/>
        <end position="83"/>
    </location>
</feature>
<feature type="region of interest" description="Disordered" evidence="7">
    <location>
        <begin position="531"/>
        <end position="568"/>
    </location>
</feature>
<feature type="region of interest" description="Disordered" evidence="7">
    <location>
        <begin position="601"/>
        <end position="638"/>
    </location>
</feature>
<feature type="region of interest" description="Disordered" evidence="7">
    <location>
        <begin position="680"/>
        <end position="703"/>
    </location>
</feature>
<feature type="region of interest" description="Disordered" evidence="7">
    <location>
        <begin position="720"/>
        <end position="818"/>
    </location>
</feature>
<feature type="compositionally biased region" description="Pro residues" evidence="7">
    <location>
        <begin position="25"/>
        <end position="34"/>
    </location>
</feature>
<feature type="compositionally biased region" description="Low complexity" evidence="7">
    <location>
        <begin position="541"/>
        <end position="550"/>
    </location>
</feature>
<feature type="compositionally biased region" description="Pro residues" evidence="7">
    <location>
        <begin position="551"/>
        <end position="563"/>
    </location>
</feature>
<feature type="compositionally biased region" description="Polar residues" evidence="7">
    <location>
        <begin position="604"/>
        <end position="613"/>
    </location>
</feature>
<feature type="compositionally biased region" description="Basic and acidic residues" evidence="7">
    <location>
        <begin position="692"/>
        <end position="703"/>
    </location>
</feature>
<feature type="compositionally biased region" description="Basic residues" evidence="7">
    <location>
        <begin position="720"/>
        <end position="729"/>
    </location>
</feature>
<feature type="compositionally biased region" description="Polar residues" evidence="7">
    <location>
        <begin position="730"/>
        <end position="766"/>
    </location>
</feature>
<feature type="compositionally biased region" description="Acidic residues" evidence="7">
    <location>
        <begin position="775"/>
        <end position="795"/>
    </location>
</feature>
<feature type="compositionally biased region" description="Pro residues" evidence="7">
    <location>
        <begin position="802"/>
        <end position="816"/>
    </location>
</feature>
<keyword id="KW-0158">Chromosome</keyword>
<keyword id="KW-0489">Methyltransferase</keyword>
<keyword id="KW-0539">Nucleus</keyword>
<keyword id="KW-1185">Reference proteome</keyword>
<keyword id="KW-0678">Repressor</keyword>
<keyword id="KW-0949">S-adenosyl-L-methionine</keyword>
<keyword id="KW-0804">Transcription</keyword>
<keyword id="KW-0805">Transcription regulation</keyword>
<keyword id="KW-0808">Transferase</keyword>
<name>SET2_CRYNJ</name>
<accession>P0CO28</accession>
<accession>Q55PX0</accession>
<accession>Q5KDJ0</accession>
<gene>
    <name type="primary">SET2</name>
    <name type="ordered locus">CNG03810</name>
</gene>